<keyword id="KW-0067">ATP-binding</keyword>
<keyword id="KW-0072">Autophagy</keyword>
<keyword id="KW-0963">Cytoplasm</keyword>
<keyword id="KW-0418">Kinase</keyword>
<keyword id="KW-0472">Membrane</keyword>
<keyword id="KW-0547">Nucleotide-binding</keyword>
<keyword id="KW-0653">Protein transport</keyword>
<keyword id="KW-1185">Reference proteome</keyword>
<keyword id="KW-0723">Serine/threonine-protein kinase</keyword>
<keyword id="KW-0808">Transferase</keyword>
<keyword id="KW-0813">Transport</keyword>
<organism>
    <name type="scientific">Kluyveromyces lactis (strain ATCC 8585 / CBS 2359 / DSM 70799 / NBRC 1267 / NRRL Y-1140 / WM37)</name>
    <name type="common">Yeast</name>
    <name type="synonym">Candida sphaerica</name>
    <dbReference type="NCBI Taxonomy" id="284590"/>
    <lineage>
        <taxon>Eukaryota</taxon>
        <taxon>Fungi</taxon>
        <taxon>Dikarya</taxon>
        <taxon>Ascomycota</taxon>
        <taxon>Saccharomycotina</taxon>
        <taxon>Saccharomycetes</taxon>
        <taxon>Saccharomycetales</taxon>
        <taxon>Saccharomycetaceae</taxon>
        <taxon>Kluyveromyces</taxon>
    </lineage>
</organism>
<protein>
    <recommendedName>
        <fullName evidence="1">Serine/threonine-protein kinase ATG1</fullName>
        <ecNumber evidence="1">2.7.11.1</ecNumber>
    </recommendedName>
    <alternativeName>
        <fullName evidence="1">Autophagy-related protein 1</fullName>
    </alternativeName>
</protein>
<gene>
    <name evidence="1" type="primary">ATG1</name>
    <name evidence="5" type="ordered locus">KLLA0C17160g</name>
</gene>
<evidence type="ECO:0000250" key="1">
    <source>
        <dbReference type="UniProtKB" id="P53104"/>
    </source>
</evidence>
<evidence type="ECO:0000255" key="2">
    <source>
        <dbReference type="PROSITE-ProRule" id="PRU00159"/>
    </source>
</evidence>
<evidence type="ECO:0000255" key="3">
    <source>
        <dbReference type="PROSITE-ProRule" id="PRU10027"/>
    </source>
</evidence>
<evidence type="ECO:0000256" key="4">
    <source>
        <dbReference type="SAM" id="MobiDB-lite"/>
    </source>
</evidence>
<evidence type="ECO:0000303" key="5">
    <source>
    </source>
</evidence>
<dbReference type="EC" id="2.7.11.1" evidence="1"/>
<dbReference type="EMBL" id="CR382123">
    <property type="protein sequence ID" value="CAH01818.1"/>
    <property type="molecule type" value="Genomic_DNA"/>
</dbReference>
<dbReference type="RefSeq" id="XP_452967.1">
    <property type="nucleotide sequence ID" value="XM_452967.1"/>
</dbReference>
<dbReference type="SASBDB" id="Q6CSX2"/>
<dbReference type="SMR" id="Q6CSX2"/>
<dbReference type="DIP" id="DIP-61491N"/>
<dbReference type="FunCoup" id="Q6CSX2">
    <property type="interactions" value="144"/>
</dbReference>
<dbReference type="IntAct" id="Q6CSX2">
    <property type="interactions" value="1"/>
</dbReference>
<dbReference type="STRING" id="284590.Q6CSX2"/>
<dbReference type="PaxDb" id="284590-Q6CSX2"/>
<dbReference type="KEGG" id="kla:KLLA0_C17160g"/>
<dbReference type="eggNOG" id="KOG0595">
    <property type="taxonomic scope" value="Eukaryota"/>
</dbReference>
<dbReference type="HOGENOM" id="CLU_006447_1_0_1"/>
<dbReference type="InParanoid" id="Q6CSX2"/>
<dbReference type="OMA" id="INNVVQW"/>
<dbReference type="Proteomes" id="UP000000598">
    <property type="component" value="Chromosome C"/>
</dbReference>
<dbReference type="GO" id="GO:1990316">
    <property type="term" value="C:Atg1/ULK1 kinase complex"/>
    <property type="evidence" value="ECO:0000269"/>
    <property type="project" value="DisProt"/>
</dbReference>
<dbReference type="GO" id="GO:0005776">
    <property type="term" value="C:autophagosome"/>
    <property type="evidence" value="ECO:0007669"/>
    <property type="project" value="TreeGrafter"/>
</dbReference>
<dbReference type="GO" id="GO:0005829">
    <property type="term" value="C:cytosol"/>
    <property type="evidence" value="ECO:0007669"/>
    <property type="project" value="TreeGrafter"/>
</dbReference>
<dbReference type="GO" id="GO:0034045">
    <property type="term" value="C:phagophore assembly site membrane"/>
    <property type="evidence" value="ECO:0007669"/>
    <property type="project" value="UniProtKB-SubCell"/>
</dbReference>
<dbReference type="GO" id="GO:0005524">
    <property type="term" value="F:ATP binding"/>
    <property type="evidence" value="ECO:0007669"/>
    <property type="project" value="UniProtKB-KW"/>
</dbReference>
<dbReference type="GO" id="GO:0106310">
    <property type="term" value="F:protein serine kinase activity"/>
    <property type="evidence" value="ECO:0007669"/>
    <property type="project" value="RHEA"/>
</dbReference>
<dbReference type="GO" id="GO:0004674">
    <property type="term" value="F:protein serine/threonine kinase activity"/>
    <property type="evidence" value="ECO:0007669"/>
    <property type="project" value="UniProtKB-KW"/>
</dbReference>
<dbReference type="GO" id="GO:0000045">
    <property type="term" value="P:autophagosome assembly"/>
    <property type="evidence" value="ECO:0007669"/>
    <property type="project" value="TreeGrafter"/>
</dbReference>
<dbReference type="GO" id="GO:0000422">
    <property type="term" value="P:autophagy of mitochondrion"/>
    <property type="evidence" value="ECO:0007669"/>
    <property type="project" value="TreeGrafter"/>
</dbReference>
<dbReference type="GO" id="GO:0034727">
    <property type="term" value="P:piecemeal microautophagy of the nucleus"/>
    <property type="evidence" value="ECO:0007669"/>
    <property type="project" value="TreeGrafter"/>
</dbReference>
<dbReference type="GO" id="GO:0015031">
    <property type="term" value="P:protein transport"/>
    <property type="evidence" value="ECO:0007669"/>
    <property type="project" value="UniProtKB-KW"/>
</dbReference>
<dbReference type="GO" id="GO:0010506">
    <property type="term" value="P:regulation of autophagy"/>
    <property type="evidence" value="ECO:0007669"/>
    <property type="project" value="InterPro"/>
</dbReference>
<dbReference type="GO" id="GO:0042594">
    <property type="term" value="P:response to starvation"/>
    <property type="evidence" value="ECO:0007669"/>
    <property type="project" value="TreeGrafter"/>
</dbReference>
<dbReference type="GO" id="GO:0061709">
    <property type="term" value="P:reticulophagy"/>
    <property type="evidence" value="ECO:0007669"/>
    <property type="project" value="TreeGrafter"/>
</dbReference>
<dbReference type="CDD" id="cd14009">
    <property type="entry name" value="STKc_ATG1_ULK_like"/>
    <property type="match status" value="1"/>
</dbReference>
<dbReference type="FunFam" id="3.30.200.20:FF:000042">
    <property type="entry name" value="Aurora kinase A"/>
    <property type="match status" value="1"/>
</dbReference>
<dbReference type="FunFam" id="1.10.510.10:FF:000817">
    <property type="entry name" value="Serine/threonine-protein kinase ATG1"/>
    <property type="match status" value="1"/>
</dbReference>
<dbReference type="Gene3D" id="1.10.510.10">
    <property type="entry name" value="Transferase(Phosphotransferase) domain 1"/>
    <property type="match status" value="1"/>
</dbReference>
<dbReference type="InterPro" id="IPR045269">
    <property type="entry name" value="Atg1-like"/>
</dbReference>
<dbReference type="InterPro" id="IPR048941">
    <property type="entry name" value="ATG1-like_MIT2"/>
</dbReference>
<dbReference type="InterPro" id="IPR022708">
    <property type="entry name" value="Atg1-like_tMIT"/>
</dbReference>
<dbReference type="InterPro" id="IPR011009">
    <property type="entry name" value="Kinase-like_dom_sf"/>
</dbReference>
<dbReference type="InterPro" id="IPR000719">
    <property type="entry name" value="Prot_kinase_dom"/>
</dbReference>
<dbReference type="InterPro" id="IPR017441">
    <property type="entry name" value="Protein_kinase_ATP_BS"/>
</dbReference>
<dbReference type="InterPro" id="IPR008271">
    <property type="entry name" value="Ser/Thr_kinase_AS"/>
</dbReference>
<dbReference type="PANTHER" id="PTHR24348:SF22">
    <property type="entry name" value="NON-SPECIFIC SERINE_THREONINE PROTEIN KINASE"/>
    <property type="match status" value="1"/>
</dbReference>
<dbReference type="PANTHER" id="PTHR24348">
    <property type="entry name" value="SERINE/THREONINE-PROTEIN KINASE UNC-51-RELATED"/>
    <property type="match status" value="1"/>
</dbReference>
<dbReference type="Pfam" id="PF12063">
    <property type="entry name" value="ATG1-like_MIT1"/>
    <property type="match status" value="1"/>
</dbReference>
<dbReference type="Pfam" id="PF21127">
    <property type="entry name" value="ATG1-like_MIT2"/>
    <property type="match status" value="1"/>
</dbReference>
<dbReference type="Pfam" id="PF00069">
    <property type="entry name" value="Pkinase"/>
    <property type="match status" value="1"/>
</dbReference>
<dbReference type="SMART" id="SM00220">
    <property type="entry name" value="S_TKc"/>
    <property type="match status" value="1"/>
</dbReference>
<dbReference type="SUPFAM" id="SSF56112">
    <property type="entry name" value="Protein kinase-like (PK-like)"/>
    <property type="match status" value="1"/>
</dbReference>
<dbReference type="PROSITE" id="PS00107">
    <property type="entry name" value="PROTEIN_KINASE_ATP"/>
    <property type="match status" value="1"/>
</dbReference>
<dbReference type="PROSITE" id="PS50011">
    <property type="entry name" value="PROTEIN_KINASE_DOM"/>
    <property type="match status" value="1"/>
</dbReference>
<dbReference type="PROSITE" id="PS00108">
    <property type="entry name" value="PROTEIN_KINASE_ST"/>
    <property type="match status" value="1"/>
</dbReference>
<proteinExistence type="evidence at protein level"/>
<comment type="function">
    <text evidence="1">Serine/threonine protein kinase involved in the cytoplasm to vacuole transport (Cvt) and found to be essential in autophagy, where it is required for the formation of autophagosomes. Involved in the clearance of protein aggregates which cannot be efficiently cleared by the proteasome. Required for selective autophagic degradation of the nucleus (nucleophagy) as well as for mitophagy which contributes to regulate mitochondrial quantity and quality by eliminating the mitochondria to a basal level to fulfill cellular energy requirements and preventing excess ROS production. Also involved in endoplasmic reticulum-specific autophagic process, in selective removal of ER-associated degradation (ERAD) substrates. Plays a key role in ATG9 and ATG23 cycling through the pre-autophagosomal structure and is necessary to promote ATG18 binding to ATG9 through phosphorylation of ATG9. Catalyzes phosphorylation of ATG4, decreasing the interaction between ATG4 and ATG8 and impairing deconjugation of PE-conjugated forms of ATG8.</text>
</comment>
<comment type="catalytic activity">
    <reaction evidence="1">
        <text>L-seryl-[protein] + ATP = O-phospho-L-seryl-[protein] + ADP + H(+)</text>
        <dbReference type="Rhea" id="RHEA:17989"/>
        <dbReference type="Rhea" id="RHEA-COMP:9863"/>
        <dbReference type="Rhea" id="RHEA-COMP:11604"/>
        <dbReference type="ChEBI" id="CHEBI:15378"/>
        <dbReference type="ChEBI" id="CHEBI:29999"/>
        <dbReference type="ChEBI" id="CHEBI:30616"/>
        <dbReference type="ChEBI" id="CHEBI:83421"/>
        <dbReference type="ChEBI" id="CHEBI:456216"/>
        <dbReference type="EC" id="2.7.11.1"/>
    </reaction>
</comment>
<comment type="catalytic activity">
    <reaction evidence="1">
        <text>L-threonyl-[protein] + ATP = O-phospho-L-threonyl-[protein] + ADP + H(+)</text>
        <dbReference type="Rhea" id="RHEA:46608"/>
        <dbReference type="Rhea" id="RHEA-COMP:11060"/>
        <dbReference type="Rhea" id="RHEA-COMP:11605"/>
        <dbReference type="ChEBI" id="CHEBI:15378"/>
        <dbReference type="ChEBI" id="CHEBI:30013"/>
        <dbReference type="ChEBI" id="CHEBI:30616"/>
        <dbReference type="ChEBI" id="CHEBI:61977"/>
        <dbReference type="ChEBI" id="CHEBI:456216"/>
        <dbReference type="EC" id="2.7.11.1"/>
    </reaction>
</comment>
<comment type="subunit">
    <text evidence="1">Homodimer. Forms a ternary complex with ATG13 and ATG17.</text>
</comment>
<comment type="interaction">
    <interactant intactId="EBI-16151357">
        <id>Q6CSX2</id>
    </interactant>
    <interactant intactId="EBI-16151385">
        <id>Q6CWK2</id>
        <label>ATG13</label>
    </interactant>
    <organismsDiffer>false</organismsDiffer>
    <experiments>4</experiments>
</comment>
<comment type="subcellular location">
    <subcellularLocation>
        <location evidence="1">Cytoplasm</location>
    </subcellularLocation>
    <subcellularLocation>
        <location evidence="1">Preautophagosomal structure membrane</location>
        <topology evidence="1">Peripheral membrane protein</topology>
    </subcellularLocation>
</comment>
<comment type="similarity">
    <text evidence="2">Belongs to the protein kinase superfamily. Ser/Thr protein kinase family. APG1/unc-51/ULK1 subfamily.</text>
</comment>
<reference key="1">
    <citation type="journal article" date="2004" name="Nature">
        <title>Genome evolution in yeasts.</title>
        <authorList>
            <person name="Dujon B."/>
            <person name="Sherman D."/>
            <person name="Fischer G."/>
            <person name="Durrens P."/>
            <person name="Casaregola S."/>
            <person name="Lafontaine I."/>
            <person name="de Montigny J."/>
            <person name="Marck C."/>
            <person name="Neuveglise C."/>
            <person name="Talla E."/>
            <person name="Goffard N."/>
            <person name="Frangeul L."/>
            <person name="Aigle M."/>
            <person name="Anthouard V."/>
            <person name="Babour A."/>
            <person name="Barbe V."/>
            <person name="Barnay S."/>
            <person name="Blanchin S."/>
            <person name="Beckerich J.-M."/>
            <person name="Beyne E."/>
            <person name="Bleykasten C."/>
            <person name="Boisrame A."/>
            <person name="Boyer J."/>
            <person name="Cattolico L."/>
            <person name="Confanioleri F."/>
            <person name="de Daruvar A."/>
            <person name="Despons L."/>
            <person name="Fabre E."/>
            <person name="Fairhead C."/>
            <person name="Ferry-Dumazet H."/>
            <person name="Groppi A."/>
            <person name="Hantraye F."/>
            <person name="Hennequin C."/>
            <person name="Jauniaux N."/>
            <person name="Joyet P."/>
            <person name="Kachouri R."/>
            <person name="Kerrest A."/>
            <person name="Koszul R."/>
            <person name="Lemaire M."/>
            <person name="Lesur I."/>
            <person name="Ma L."/>
            <person name="Muller H."/>
            <person name="Nicaud J.-M."/>
            <person name="Nikolski M."/>
            <person name="Oztas S."/>
            <person name="Ozier-Kalogeropoulos O."/>
            <person name="Pellenz S."/>
            <person name="Potier S."/>
            <person name="Richard G.-F."/>
            <person name="Straub M.-L."/>
            <person name="Suleau A."/>
            <person name="Swennen D."/>
            <person name="Tekaia F."/>
            <person name="Wesolowski-Louvel M."/>
            <person name="Westhof E."/>
            <person name="Wirth B."/>
            <person name="Zeniou-Meyer M."/>
            <person name="Zivanovic Y."/>
            <person name="Bolotin-Fukuhara M."/>
            <person name="Thierry A."/>
            <person name="Bouchier C."/>
            <person name="Caudron B."/>
            <person name="Scarpelli C."/>
            <person name="Gaillardin C."/>
            <person name="Weissenbach J."/>
            <person name="Wincker P."/>
            <person name="Souciet J.-L."/>
        </authorList>
    </citation>
    <scope>NUCLEOTIDE SEQUENCE [LARGE SCALE GENOMIC DNA]</scope>
    <source>
        <strain>ATCC 8585 / CBS 2359 / DSM 70799 / NBRC 1267 / NRRL Y-1140 / WM37</strain>
    </source>
</reference>
<feature type="chain" id="PRO_0000085647" description="Serine/threonine-protein kinase ATG1">
    <location>
        <begin position="1"/>
        <end position="831"/>
    </location>
</feature>
<feature type="domain" description="Protein kinase" evidence="2">
    <location>
        <begin position="21"/>
        <end position="321"/>
    </location>
</feature>
<feature type="region of interest" description="Disordered" evidence="4">
    <location>
        <begin position="360"/>
        <end position="419"/>
    </location>
</feature>
<feature type="compositionally biased region" description="Polar residues" evidence="4">
    <location>
        <begin position="360"/>
        <end position="382"/>
    </location>
</feature>
<feature type="compositionally biased region" description="Polar residues" evidence="4">
    <location>
        <begin position="405"/>
        <end position="419"/>
    </location>
</feature>
<feature type="active site" description="Proton acceptor" evidence="2 3">
    <location>
        <position position="168"/>
    </location>
</feature>
<feature type="binding site" evidence="2">
    <location>
        <begin position="27"/>
        <end position="35"/>
    </location>
    <ligand>
        <name>ATP</name>
        <dbReference type="ChEBI" id="CHEBI:30616"/>
    </ligand>
</feature>
<feature type="binding site" evidence="2">
    <location>
        <position position="50"/>
    </location>
    <ligand>
        <name>ATP</name>
        <dbReference type="ChEBI" id="CHEBI:30616"/>
    </ligand>
</feature>
<accession>Q6CSX2</accession>
<name>ATG1_KLULA</name>
<sequence>MSSESHDKVVAKAIRLPTENYSVEKEIGKGSFAVVYKGLSLRDGRNIAIKAVSRSKLKNKKLLENLEVEIAILKKIKHPHIVGLIDCERTSSDFYLIMEYCALGDLTFFIKKRKNLVLKHPLIKTVFEHYPPPSTEHNGLNRVLVVNYLQQLSSALKFLRSKNLVHRDIKPQNLLLCTPLLDYNDPKTFHELGFVGIYNLPILKIADFGFARFLPNTSLAETLCGSPLYMAPEILNYQKYNAKADLWSVGTVLYEMCCGRPPFKASNHLELFQKIKKANDEITVPSNCYIEPKLFNLIRGLLTFDPDSRMGFTDFFNNEVVTEDLTRYEQSYEPDLESKSKDVAESNMFVSEYLVKPLKQQESAHIPPTQTDENTSVQTGVRRTSGKERLATNHPPHQQIHPEDNSQNPEQSYQSASQKRLKSSYNDLILEKEYVVVEKKTVEVNSLADDFANNGPITNNQGAQVIKPLRYRTSSSSDASGGRRASLVERRLSISSLSPSNALSKALGLASVRLFGYQHNTKATSSPPQQTLLNPQIFQELTENAVLRADHKLNPFSEQMLDSNITPAVESLAAKAFVMYSFAEMKFSQILPTPPSSTDYDPLSDKRLSNGSCAIEDEEDLDQGRPPSNQTLTSATTKISSATNVDTQIPAPELKKLCTESLLLYLKALTILAASMKLTSKWWYENESKNCTLKLNILVQWIRDRFNECLDKAEFLRLKLHAINTSPNSQWSDDDPVIFVEKLIYDRALDISRNAARMEMESGNYNTCELAYATSLWMLEILLDENFQFNEVYDDEYASNITSLDESDKEMIKKYISSIANRLKALKSKMV</sequence>